<evidence type="ECO:0000255" key="1">
    <source>
        <dbReference type="HAMAP-Rule" id="MF_01969"/>
    </source>
</evidence>
<dbReference type="EC" id="3.5.1.9" evidence="1"/>
<dbReference type="EMBL" id="CP000090">
    <property type="protein sequence ID" value="AAZ60188.1"/>
    <property type="molecule type" value="Genomic_DNA"/>
</dbReference>
<dbReference type="SMR" id="Q474J5"/>
<dbReference type="STRING" id="264198.Reut_A0809"/>
<dbReference type="KEGG" id="reu:Reut_A0809"/>
<dbReference type="eggNOG" id="COG1878">
    <property type="taxonomic scope" value="Bacteria"/>
</dbReference>
<dbReference type="HOGENOM" id="CLU_030671_3_1_4"/>
<dbReference type="OrthoDB" id="9796085at2"/>
<dbReference type="UniPathway" id="UPA00333">
    <property type="reaction ID" value="UER00454"/>
</dbReference>
<dbReference type="GO" id="GO:0004061">
    <property type="term" value="F:arylformamidase activity"/>
    <property type="evidence" value="ECO:0000250"/>
    <property type="project" value="UniProtKB"/>
</dbReference>
<dbReference type="GO" id="GO:0004328">
    <property type="term" value="F:formamidase activity"/>
    <property type="evidence" value="ECO:0007669"/>
    <property type="project" value="InterPro"/>
</dbReference>
<dbReference type="GO" id="GO:0008270">
    <property type="term" value="F:zinc ion binding"/>
    <property type="evidence" value="ECO:0007669"/>
    <property type="project" value="UniProtKB-UniRule"/>
</dbReference>
<dbReference type="GO" id="GO:0043420">
    <property type="term" value="P:anthranilate metabolic process"/>
    <property type="evidence" value="ECO:0000250"/>
    <property type="project" value="UniProtKB"/>
</dbReference>
<dbReference type="GO" id="GO:0019441">
    <property type="term" value="P:L-tryptophan catabolic process to kynurenine"/>
    <property type="evidence" value="ECO:0000250"/>
    <property type="project" value="UniProtKB"/>
</dbReference>
<dbReference type="FunFam" id="3.50.30.50:FF:000001">
    <property type="entry name" value="Kynurenine formamidase"/>
    <property type="match status" value="1"/>
</dbReference>
<dbReference type="Gene3D" id="3.50.30.50">
    <property type="entry name" value="Putative cyclase"/>
    <property type="match status" value="1"/>
</dbReference>
<dbReference type="HAMAP" id="MF_01969">
    <property type="entry name" value="KynB"/>
    <property type="match status" value="1"/>
</dbReference>
<dbReference type="InterPro" id="IPR007325">
    <property type="entry name" value="KFase/CYL"/>
</dbReference>
<dbReference type="InterPro" id="IPR037175">
    <property type="entry name" value="KFase_sf"/>
</dbReference>
<dbReference type="InterPro" id="IPR017484">
    <property type="entry name" value="Kynurenine_formamidase_bac"/>
</dbReference>
<dbReference type="NCBIfam" id="TIGR03035">
    <property type="entry name" value="trp_arylform"/>
    <property type="match status" value="1"/>
</dbReference>
<dbReference type="PANTHER" id="PTHR31118">
    <property type="entry name" value="CYCLASE-LIKE PROTEIN 2"/>
    <property type="match status" value="1"/>
</dbReference>
<dbReference type="PANTHER" id="PTHR31118:SF32">
    <property type="entry name" value="KYNURENINE FORMAMIDASE"/>
    <property type="match status" value="1"/>
</dbReference>
<dbReference type="Pfam" id="PF04199">
    <property type="entry name" value="Cyclase"/>
    <property type="match status" value="1"/>
</dbReference>
<dbReference type="SUPFAM" id="SSF102198">
    <property type="entry name" value="Putative cyclase"/>
    <property type="match status" value="1"/>
</dbReference>
<sequence>MTNRPATPADSRKLWDISPPLSPATPVWPGDTPFQQETAWQMDEHCPVNVGRITLSPHTGAHADAPLHYAADGAPIGEVGLEPYLGRCRVIHCVGATPVVAPHHVEHALNDLPTRVLLRTYKRAPLDQWDTGFCAVAPETIALLAAHGVQLIGIDTPSLDPQESKTMDAHKAVRRHGLAILEGLVLDAVAEGDYELIALPLRFTGLDASPVRAVLRSLD</sequence>
<proteinExistence type="inferred from homology"/>
<organism>
    <name type="scientific">Cupriavidus pinatubonensis (strain JMP 134 / LMG 1197)</name>
    <name type="common">Cupriavidus necator (strain JMP 134)</name>
    <dbReference type="NCBI Taxonomy" id="264198"/>
    <lineage>
        <taxon>Bacteria</taxon>
        <taxon>Pseudomonadati</taxon>
        <taxon>Pseudomonadota</taxon>
        <taxon>Betaproteobacteria</taxon>
        <taxon>Burkholderiales</taxon>
        <taxon>Burkholderiaceae</taxon>
        <taxon>Cupriavidus</taxon>
    </lineage>
</organism>
<name>KYNB_CUPPJ</name>
<reference key="1">
    <citation type="journal article" date="2010" name="PLoS ONE">
        <title>The complete multipartite genome sequence of Cupriavidus necator JMP134, a versatile pollutant degrader.</title>
        <authorList>
            <person name="Lykidis A."/>
            <person name="Perez-Pantoja D."/>
            <person name="Ledger T."/>
            <person name="Mavromatis K."/>
            <person name="Anderson I.J."/>
            <person name="Ivanova N.N."/>
            <person name="Hooper S.D."/>
            <person name="Lapidus A."/>
            <person name="Lucas S."/>
            <person name="Gonzalez B."/>
            <person name="Kyrpides N.C."/>
        </authorList>
    </citation>
    <scope>NUCLEOTIDE SEQUENCE [LARGE SCALE GENOMIC DNA]</scope>
    <source>
        <strain>JMP134 / LMG 1197</strain>
    </source>
</reference>
<comment type="function">
    <text evidence="1">Catalyzes the hydrolysis of N-formyl-L-kynurenine to L-kynurenine, the second step in the kynurenine pathway of tryptophan degradation.</text>
</comment>
<comment type="catalytic activity">
    <reaction evidence="1">
        <text>N-formyl-L-kynurenine + H2O = L-kynurenine + formate + H(+)</text>
        <dbReference type="Rhea" id="RHEA:13009"/>
        <dbReference type="ChEBI" id="CHEBI:15377"/>
        <dbReference type="ChEBI" id="CHEBI:15378"/>
        <dbReference type="ChEBI" id="CHEBI:15740"/>
        <dbReference type="ChEBI" id="CHEBI:57959"/>
        <dbReference type="ChEBI" id="CHEBI:58629"/>
        <dbReference type="EC" id="3.5.1.9"/>
    </reaction>
</comment>
<comment type="cofactor">
    <cofactor evidence="1">
        <name>Zn(2+)</name>
        <dbReference type="ChEBI" id="CHEBI:29105"/>
    </cofactor>
    <text evidence="1">Binds 2 zinc ions per subunit.</text>
</comment>
<comment type="pathway">
    <text evidence="1">Amino-acid degradation; L-tryptophan degradation via kynurenine pathway; L-kynurenine from L-tryptophan: step 2/2.</text>
</comment>
<comment type="subunit">
    <text evidence="1">Homodimer.</text>
</comment>
<comment type="similarity">
    <text evidence="1">Belongs to the Cyclase 1 superfamily. KynB family.</text>
</comment>
<accession>Q474J5</accession>
<protein>
    <recommendedName>
        <fullName evidence="1">Kynurenine formamidase</fullName>
        <shortName evidence="1">KFA</shortName>
        <shortName evidence="1">KFase</shortName>
        <ecNumber evidence="1">3.5.1.9</ecNumber>
    </recommendedName>
    <alternativeName>
        <fullName evidence="1">Arylformamidase</fullName>
    </alternativeName>
    <alternativeName>
        <fullName evidence="1">N-formylkynurenine formamidase</fullName>
        <shortName evidence="1">FKF</shortName>
    </alternativeName>
</protein>
<gene>
    <name evidence="1" type="primary">kynB</name>
    <name type="ordered locus">Reut_A0809</name>
</gene>
<keyword id="KW-0378">Hydrolase</keyword>
<keyword id="KW-0479">Metal-binding</keyword>
<keyword id="KW-0823">Tryptophan catabolism</keyword>
<keyword id="KW-0862">Zinc</keyword>
<feature type="chain" id="PRO_0000362134" description="Kynurenine formamidase">
    <location>
        <begin position="1"/>
        <end position="219"/>
    </location>
</feature>
<feature type="active site" description="Proton donor/acceptor" evidence="1">
    <location>
        <position position="68"/>
    </location>
</feature>
<feature type="binding site" evidence="1">
    <location>
        <position position="28"/>
    </location>
    <ligand>
        <name>substrate</name>
    </ligand>
</feature>
<feature type="binding site" evidence="1">
    <location>
        <position position="58"/>
    </location>
    <ligand>
        <name>Zn(2+)</name>
        <dbReference type="ChEBI" id="CHEBI:29105"/>
        <label>1</label>
    </ligand>
</feature>
<feature type="binding site" evidence="1">
    <location>
        <position position="62"/>
    </location>
    <ligand>
        <name>Zn(2+)</name>
        <dbReference type="ChEBI" id="CHEBI:29105"/>
        <label>1</label>
    </ligand>
</feature>
<feature type="binding site" evidence="1">
    <location>
        <position position="64"/>
    </location>
    <ligand>
        <name>Zn(2+)</name>
        <dbReference type="ChEBI" id="CHEBI:29105"/>
        <label>1</label>
    </ligand>
</feature>
<feature type="binding site" evidence="1">
    <location>
        <position position="64"/>
    </location>
    <ligand>
        <name>Zn(2+)</name>
        <dbReference type="ChEBI" id="CHEBI:29105"/>
        <label>2</label>
    </ligand>
</feature>
<feature type="binding site" evidence="1">
    <location>
        <position position="170"/>
    </location>
    <ligand>
        <name>Zn(2+)</name>
        <dbReference type="ChEBI" id="CHEBI:29105"/>
        <label>2</label>
    </ligand>
</feature>
<feature type="binding site" evidence="1">
    <location>
        <position position="182"/>
    </location>
    <ligand>
        <name>Zn(2+)</name>
        <dbReference type="ChEBI" id="CHEBI:29105"/>
        <label>1</label>
    </ligand>
</feature>
<feature type="binding site" evidence="1">
    <location>
        <position position="182"/>
    </location>
    <ligand>
        <name>Zn(2+)</name>
        <dbReference type="ChEBI" id="CHEBI:29105"/>
        <label>2</label>
    </ligand>
</feature>